<keyword id="KW-1003">Cell membrane</keyword>
<keyword id="KW-1015">Disulfide bond</keyword>
<keyword id="KW-0297">G-protein coupled receptor</keyword>
<keyword id="KW-0325">Glycoprotein</keyword>
<keyword id="KW-0472">Membrane</keyword>
<keyword id="KW-0552">Olfaction</keyword>
<keyword id="KW-0675">Receptor</keyword>
<keyword id="KW-1185">Reference proteome</keyword>
<keyword id="KW-0716">Sensory transduction</keyword>
<keyword id="KW-0807">Transducer</keyword>
<keyword id="KW-0812">Transmembrane</keyword>
<keyword id="KW-1133">Transmembrane helix</keyword>
<reference key="1">
    <citation type="journal article" date="1999" name="Genomics">
        <title>Primate evolution of an olfactory receptor cluster: diversification by gene conversion and recent emergence of pseudogenes.</title>
        <authorList>
            <person name="Sharon D."/>
            <person name="Glusman G."/>
            <person name="Pilpel Y."/>
            <person name="Khen M."/>
            <person name="Gruetzner F."/>
            <person name="Haaf T."/>
            <person name="Lancet D."/>
        </authorList>
    </citation>
    <scope>NUCLEOTIDE SEQUENCE [GENOMIC DNA]</scope>
</reference>
<proteinExistence type="inferred from homology"/>
<organism>
    <name type="scientific">Gorilla gorilla gorilla</name>
    <name type="common">Western lowland gorilla</name>
    <dbReference type="NCBI Taxonomy" id="9595"/>
    <lineage>
        <taxon>Eukaryota</taxon>
        <taxon>Metazoa</taxon>
        <taxon>Chordata</taxon>
        <taxon>Craniata</taxon>
        <taxon>Vertebrata</taxon>
        <taxon>Euteleostomi</taxon>
        <taxon>Mammalia</taxon>
        <taxon>Eutheria</taxon>
        <taxon>Euarchontoglires</taxon>
        <taxon>Primates</taxon>
        <taxon>Haplorrhini</taxon>
        <taxon>Catarrhini</taxon>
        <taxon>Hominidae</taxon>
        <taxon>Gorilla</taxon>
    </lineage>
</organism>
<gene>
    <name type="primary">OR1E2</name>
</gene>
<evidence type="ECO:0000255" key="1"/>
<evidence type="ECO:0000255" key="2">
    <source>
        <dbReference type="PROSITE-ProRule" id="PRU00521"/>
    </source>
</evidence>
<evidence type="ECO:0000305" key="3"/>
<comment type="function">
    <text evidence="3">Odorant receptor.</text>
</comment>
<comment type="subcellular location">
    <subcellularLocation>
        <location>Cell membrane</location>
        <topology>Multi-pass membrane protein</topology>
    </subcellularLocation>
</comment>
<comment type="similarity">
    <text evidence="2">Belongs to the G-protein coupled receptor 1 family.</text>
</comment>
<accession>Q9TQX4</accession>
<protein>
    <recommendedName>
        <fullName>Olfactory receptor 1E2</fullName>
    </recommendedName>
</protein>
<feature type="chain" id="PRO_0000246149" description="Olfactory receptor 1E2">
    <location>
        <begin position="1"/>
        <end position="314"/>
    </location>
</feature>
<feature type="topological domain" description="Extracellular" evidence="1">
    <location>
        <begin position="1"/>
        <end position="25"/>
    </location>
</feature>
<feature type="transmembrane region" description="Helical; Name=1" evidence="1">
    <location>
        <begin position="26"/>
        <end position="49"/>
    </location>
</feature>
<feature type="topological domain" description="Cytoplasmic" evidence="1">
    <location>
        <begin position="50"/>
        <end position="57"/>
    </location>
</feature>
<feature type="transmembrane region" description="Helical; Name=2" evidence="1">
    <location>
        <begin position="58"/>
        <end position="79"/>
    </location>
</feature>
<feature type="topological domain" description="Extracellular" evidence="1">
    <location>
        <begin position="80"/>
        <end position="100"/>
    </location>
</feature>
<feature type="transmembrane region" description="Helical; Name=3" evidence="1">
    <location>
        <begin position="101"/>
        <end position="120"/>
    </location>
</feature>
<feature type="topological domain" description="Cytoplasmic" evidence="1">
    <location>
        <begin position="121"/>
        <end position="139"/>
    </location>
</feature>
<feature type="transmembrane region" description="Helical; Name=4" evidence="1">
    <location>
        <begin position="140"/>
        <end position="158"/>
    </location>
</feature>
<feature type="topological domain" description="Extracellular" evidence="1">
    <location>
        <begin position="159"/>
        <end position="195"/>
    </location>
</feature>
<feature type="transmembrane region" description="Helical; Name=5" evidence="1">
    <location>
        <begin position="196"/>
        <end position="219"/>
    </location>
</feature>
<feature type="topological domain" description="Cytoplasmic" evidence="1">
    <location>
        <begin position="220"/>
        <end position="236"/>
    </location>
</feature>
<feature type="transmembrane region" description="Helical; Name=6" evidence="1">
    <location>
        <begin position="237"/>
        <end position="259"/>
    </location>
</feature>
<feature type="topological domain" description="Extracellular" evidence="1">
    <location>
        <begin position="260"/>
        <end position="272"/>
    </location>
</feature>
<feature type="transmembrane region" description="Helical; Name=7" evidence="1">
    <location>
        <begin position="273"/>
        <end position="292"/>
    </location>
</feature>
<feature type="topological domain" description="Cytoplasmic" evidence="1">
    <location>
        <begin position="293"/>
        <end position="314"/>
    </location>
</feature>
<feature type="glycosylation site" description="N-linked (GlcNAc...) asparagine" evidence="1">
    <location>
        <position position="5"/>
    </location>
</feature>
<feature type="glycosylation site" description="N-linked (GlcNAc...) asparagine" evidence="1">
    <location>
        <position position="265"/>
    </location>
</feature>
<feature type="disulfide bond" evidence="2">
    <location>
        <begin position="97"/>
        <end position="189"/>
    </location>
</feature>
<dbReference type="EMBL" id="AF101760">
    <property type="protein sequence ID" value="AAF03336.1"/>
    <property type="molecule type" value="Genomic_DNA"/>
</dbReference>
<dbReference type="EMBL" id="AF101761">
    <property type="protein sequence ID" value="AAF03337.1"/>
    <property type="molecule type" value="Genomic_DNA"/>
</dbReference>
<dbReference type="SMR" id="Q9TQX4"/>
<dbReference type="FunCoup" id="Q9TQX4">
    <property type="interactions" value="317"/>
</dbReference>
<dbReference type="GlyCosmos" id="Q9TQX4">
    <property type="glycosylation" value="2 sites, No reported glycans"/>
</dbReference>
<dbReference type="eggNOG" id="ENOG502SI5J">
    <property type="taxonomic scope" value="Eukaryota"/>
</dbReference>
<dbReference type="InParanoid" id="Q9TQX4"/>
<dbReference type="Proteomes" id="UP000001519">
    <property type="component" value="Unplaced"/>
</dbReference>
<dbReference type="GO" id="GO:0005886">
    <property type="term" value="C:plasma membrane"/>
    <property type="evidence" value="ECO:0000318"/>
    <property type="project" value="GO_Central"/>
</dbReference>
<dbReference type="GO" id="GO:0004930">
    <property type="term" value="F:G protein-coupled receptor activity"/>
    <property type="evidence" value="ECO:0007669"/>
    <property type="project" value="UniProtKB-KW"/>
</dbReference>
<dbReference type="GO" id="GO:0004984">
    <property type="term" value="F:olfactory receptor activity"/>
    <property type="evidence" value="ECO:0000318"/>
    <property type="project" value="GO_Central"/>
</dbReference>
<dbReference type="GO" id="GO:0007165">
    <property type="term" value="P:signal transduction"/>
    <property type="evidence" value="ECO:0000318"/>
    <property type="project" value="GO_Central"/>
</dbReference>
<dbReference type="CDD" id="cd15236">
    <property type="entry name" value="7tmA_OR1E-like"/>
    <property type="match status" value="1"/>
</dbReference>
<dbReference type="FunFam" id="1.20.1070.10:FF:000009">
    <property type="entry name" value="Olfactory receptor"/>
    <property type="match status" value="1"/>
</dbReference>
<dbReference type="Gene3D" id="1.20.1070.10">
    <property type="entry name" value="Rhodopsin 7-helix transmembrane proteins"/>
    <property type="match status" value="1"/>
</dbReference>
<dbReference type="InterPro" id="IPR000276">
    <property type="entry name" value="GPCR_Rhodpsn"/>
</dbReference>
<dbReference type="InterPro" id="IPR017452">
    <property type="entry name" value="GPCR_Rhodpsn_7TM"/>
</dbReference>
<dbReference type="InterPro" id="IPR000725">
    <property type="entry name" value="Olfact_rcpt"/>
</dbReference>
<dbReference type="PANTHER" id="PTHR48001">
    <property type="entry name" value="OLFACTORY RECEPTOR"/>
    <property type="match status" value="1"/>
</dbReference>
<dbReference type="Pfam" id="PF13853">
    <property type="entry name" value="7tm_4"/>
    <property type="match status" value="1"/>
</dbReference>
<dbReference type="PRINTS" id="PR00237">
    <property type="entry name" value="GPCRRHODOPSN"/>
</dbReference>
<dbReference type="PRINTS" id="PR00245">
    <property type="entry name" value="OLFACTORYR"/>
</dbReference>
<dbReference type="SUPFAM" id="SSF81321">
    <property type="entry name" value="Family A G protein-coupled receptor-like"/>
    <property type="match status" value="1"/>
</dbReference>
<dbReference type="PROSITE" id="PS00237">
    <property type="entry name" value="G_PROTEIN_RECEP_F1_1"/>
    <property type="match status" value="1"/>
</dbReference>
<dbReference type="PROSITE" id="PS50262">
    <property type="entry name" value="G_PROTEIN_RECEP_F1_2"/>
    <property type="match status" value="1"/>
</dbReference>
<name>OR1E2_GORGO</name>
<sequence length="314" mass="35285">MMGQNQTSISDFLLLGLPIQPEQQNLCYALFLAMYLTTLLGNLLIIVLIRLDSHLHTPMYLFLSNLSFSDLCFSSVTIPKLLQNMQNQDPSIPYADCLTQMYFFLLFGDLESFLLVAMAYDRYVAICFPLHYTAIMSPMLCLSLVALSWVLTTFHAMLHTLLMARLCFCADNVIPHFFCDMSALLKLACSDTRVNEWVIFIMGGLIVVIPFLLILGSYARIVSSILKVPSSKGICKAFSTCGSHLSVVSLFYGTIIGLYLCPSANSSTLKETVMAMMYTVVTPMLNPFIYSLRNRDMKGALERVICKRKNPFLL</sequence>